<accession>Q1D1H8</accession>
<organism>
    <name type="scientific">Myxococcus xanthus (strain DK1622)</name>
    <dbReference type="NCBI Taxonomy" id="246197"/>
    <lineage>
        <taxon>Bacteria</taxon>
        <taxon>Pseudomonadati</taxon>
        <taxon>Myxococcota</taxon>
        <taxon>Myxococcia</taxon>
        <taxon>Myxococcales</taxon>
        <taxon>Cystobacterineae</taxon>
        <taxon>Myxococcaceae</taxon>
        <taxon>Myxococcus</taxon>
    </lineage>
</organism>
<proteinExistence type="inferred from homology"/>
<dbReference type="EC" id="7.4.2.8" evidence="1"/>
<dbReference type="EMBL" id="CP000113">
    <property type="protein sequence ID" value="ABF88484.1"/>
    <property type="molecule type" value="Genomic_DNA"/>
</dbReference>
<dbReference type="RefSeq" id="WP_011555310.1">
    <property type="nucleotide sequence ID" value="NC_008095.1"/>
</dbReference>
<dbReference type="SMR" id="Q1D1H8"/>
<dbReference type="STRING" id="246197.MXAN_5345"/>
<dbReference type="EnsemblBacteria" id="ABF88484">
    <property type="protein sequence ID" value="ABF88484"/>
    <property type="gene ID" value="MXAN_5345"/>
</dbReference>
<dbReference type="GeneID" id="41362614"/>
<dbReference type="KEGG" id="mxa:MXAN_5345"/>
<dbReference type="eggNOG" id="COG0653">
    <property type="taxonomic scope" value="Bacteria"/>
</dbReference>
<dbReference type="HOGENOM" id="CLU_005314_3_0_7"/>
<dbReference type="OrthoDB" id="9805579at2"/>
<dbReference type="Proteomes" id="UP000002402">
    <property type="component" value="Chromosome"/>
</dbReference>
<dbReference type="GO" id="GO:0031522">
    <property type="term" value="C:cell envelope Sec protein transport complex"/>
    <property type="evidence" value="ECO:0007669"/>
    <property type="project" value="TreeGrafter"/>
</dbReference>
<dbReference type="GO" id="GO:0005829">
    <property type="term" value="C:cytosol"/>
    <property type="evidence" value="ECO:0007669"/>
    <property type="project" value="TreeGrafter"/>
</dbReference>
<dbReference type="GO" id="GO:0005886">
    <property type="term" value="C:plasma membrane"/>
    <property type="evidence" value="ECO:0007669"/>
    <property type="project" value="UniProtKB-SubCell"/>
</dbReference>
<dbReference type="GO" id="GO:0005524">
    <property type="term" value="F:ATP binding"/>
    <property type="evidence" value="ECO:0007669"/>
    <property type="project" value="UniProtKB-UniRule"/>
</dbReference>
<dbReference type="GO" id="GO:0046872">
    <property type="term" value="F:metal ion binding"/>
    <property type="evidence" value="ECO:0007669"/>
    <property type="project" value="UniProtKB-KW"/>
</dbReference>
<dbReference type="GO" id="GO:0008564">
    <property type="term" value="F:protein-exporting ATPase activity"/>
    <property type="evidence" value="ECO:0007669"/>
    <property type="project" value="UniProtKB-EC"/>
</dbReference>
<dbReference type="GO" id="GO:0065002">
    <property type="term" value="P:intracellular protein transmembrane transport"/>
    <property type="evidence" value="ECO:0007669"/>
    <property type="project" value="UniProtKB-UniRule"/>
</dbReference>
<dbReference type="GO" id="GO:0017038">
    <property type="term" value="P:protein import"/>
    <property type="evidence" value="ECO:0007669"/>
    <property type="project" value="InterPro"/>
</dbReference>
<dbReference type="GO" id="GO:0006605">
    <property type="term" value="P:protein targeting"/>
    <property type="evidence" value="ECO:0007669"/>
    <property type="project" value="UniProtKB-UniRule"/>
</dbReference>
<dbReference type="GO" id="GO:0043952">
    <property type="term" value="P:protein transport by the Sec complex"/>
    <property type="evidence" value="ECO:0007669"/>
    <property type="project" value="TreeGrafter"/>
</dbReference>
<dbReference type="CDD" id="cd17928">
    <property type="entry name" value="DEXDc_SecA"/>
    <property type="match status" value="1"/>
</dbReference>
<dbReference type="CDD" id="cd18803">
    <property type="entry name" value="SF2_C_secA"/>
    <property type="match status" value="1"/>
</dbReference>
<dbReference type="FunFam" id="3.40.50.300:FF:000113">
    <property type="entry name" value="Preprotein translocase subunit SecA"/>
    <property type="match status" value="1"/>
</dbReference>
<dbReference type="FunFam" id="3.90.1440.10:FF:000001">
    <property type="entry name" value="Preprotein translocase subunit SecA"/>
    <property type="match status" value="1"/>
</dbReference>
<dbReference type="Gene3D" id="1.10.3060.10">
    <property type="entry name" value="Helical scaffold and wing domains of SecA"/>
    <property type="match status" value="1"/>
</dbReference>
<dbReference type="Gene3D" id="3.40.50.300">
    <property type="entry name" value="P-loop containing nucleotide triphosphate hydrolases"/>
    <property type="match status" value="2"/>
</dbReference>
<dbReference type="Gene3D" id="3.90.1440.10">
    <property type="entry name" value="SecA, preprotein cross-linking domain"/>
    <property type="match status" value="1"/>
</dbReference>
<dbReference type="HAMAP" id="MF_01382">
    <property type="entry name" value="SecA"/>
    <property type="match status" value="1"/>
</dbReference>
<dbReference type="InterPro" id="IPR014001">
    <property type="entry name" value="Helicase_ATP-bd"/>
</dbReference>
<dbReference type="InterPro" id="IPR001650">
    <property type="entry name" value="Helicase_C-like"/>
</dbReference>
<dbReference type="InterPro" id="IPR027417">
    <property type="entry name" value="P-loop_NTPase"/>
</dbReference>
<dbReference type="InterPro" id="IPR004027">
    <property type="entry name" value="SEC_C_motif"/>
</dbReference>
<dbReference type="InterPro" id="IPR000185">
    <property type="entry name" value="SecA"/>
</dbReference>
<dbReference type="InterPro" id="IPR020937">
    <property type="entry name" value="SecA_CS"/>
</dbReference>
<dbReference type="InterPro" id="IPR011115">
    <property type="entry name" value="SecA_DEAD"/>
</dbReference>
<dbReference type="InterPro" id="IPR014018">
    <property type="entry name" value="SecA_motor_DEAD"/>
</dbReference>
<dbReference type="InterPro" id="IPR011130">
    <property type="entry name" value="SecA_preprotein_X-link_dom"/>
</dbReference>
<dbReference type="InterPro" id="IPR044722">
    <property type="entry name" value="SecA_SF2_C"/>
</dbReference>
<dbReference type="InterPro" id="IPR011116">
    <property type="entry name" value="SecA_Wing/Scaffold"/>
</dbReference>
<dbReference type="InterPro" id="IPR036266">
    <property type="entry name" value="SecA_Wing/Scaffold_sf"/>
</dbReference>
<dbReference type="InterPro" id="IPR036670">
    <property type="entry name" value="SecA_X-link_sf"/>
</dbReference>
<dbReference type="NCBIfam" id="NF009538">
    <property type="entry name" value="PRK12904.1"/>
    <property type="match status" value="1"/>
</dbReference>
<dbReference type="NCBIfam" id="TIGR00963">
    <property type="entry name" value="secA"/>
    <property type="match status" value="1"/>
</dbReference>
<dbReference type="PANTHER" id="PTHR30612:SF0">
    <property type="entry name" value="CHLOROPLAST PROTEIN-TRANSPORTING ATPASE"/>
    <property type="match status" value="1"/>
</dbReference>
<dbReference type="PANTHER" id="PTHR30612">
    <property type="entry name" value="SECA INNER MEMBRANE COMPONENT OF SEC PROTEIN SECRETION SYSTEM"/>
    <property type="match status" value="1"/>
</dbReference>
<dbReference type="Pfam" id="PF21090">
    <property type="entry name" value="P-loop_SecA"/>
    <property type="match status" value="1"/>
</dbReference>
<dbReference type="Pfam" id="PF02810">
    <property type="entry name" value="SEC-C"/>
    <property type="match status" value="1"/>
</dbReference>
<dbReference type="Pfam" id="PF07517">
    <property type="entry name" value="SecA_DEAD"/>
    <property type="match status" value="1"/>
</dbReference>
<dbReference type="Pfam" id="PF01043">
    <property type="entry name" value="SecA_PP_bind"/>
    <property type="match status" value="1"/>
</dbReference>
<dbReference type="Pfam" id="PF07516">
    <property type="entry name" value="SecA_SW"/>
    <property type="match status" value="1"/>
</dbReference>
<dbReference type="PRINTS" id="PR00906">
    <property type="entry name" value="SECA"/>
</dbReference>
<dbReference type="SMART" id="SM00957">
    <property type="entry name" value="SecA_DEAD"/>
    <property type="match status" value="1"/>
</dbReference>
<dbReference type="SMART" id="SM00958">
    <property type="entry name" value="SecA_PP_bind"/>
    <property type="match status" value="1"/>
</dbReference>
<dbReference type="SUPFAM" id="SSF81886">
    <property type="entry name" value="Helical scaffold and wing domains of SecA"/>
    <property type="match status" value="1"/>
</dbReference>
<dbReference type="SUPFAM" id="SSF52540">
    <property type="entry name" value="P-loop containing nucleoside triphosphate hydrolases"/>
    <property type="match status" value="2"/>
</dbReference>
<dbReference type="SUPFAM" id="SSF81767">
    <property type="entry name" value="Pre-protein crosslinking domain of SecA"/>
    <property type="match status" value="1"/>
</dbReference>
<dbReference type="PROSITE" id="PS01312">
    <property type="entry name" value="SECA"/>
    <property type="match status" value="1"/>
</dbReference>
<dbReference type="PROSITE" id="PS51196">
    <property type="entry name" value="SECA_MOTOR_DEAD"/>
    <property type="match status" value="1"/>
</dbReference>
<evidence type="ECO:0000255" key="1">
    <source>
        <dbReference type="HAMAP-Rule" id="MF_01382"/>
    </source>
</evidence>
<evidence type="ECO:0000256" key="2">
    <source>
        <dbReference type="SAM" id="MobiDB-lite"/>
    </source>
</evidence>
<feature type="chain" id="PRO_0000318396" description="Protein translocase subunit SecA">
    <location>
        <begin position="1"/>
        <end position="940"/>
    </location>
</feature>
<feature type="region of interest" description="Disordered" evidence="2">
    <location>
        <begin position="879"/>
        <end position="940"/>
    </location>
</feature>
<feature type="compositionally biased region" description="Basic and acidic residues" evidence="2">
    <location>
        <begin position="884"/>
        <end position="898"/>
    </location>
</feature>
<feature type="compositionally biased region" description="Low complexity" evidence="2">
    <location>
        <begin position="900"/>
        <end position="915"/>
    </location>
</feature>
<feature type="binding site" evidence="1">
    <location>
        <position position="87"/>
    </location>
    <ligand>
        <name>ATP</name>
        <dbReference type="ChEBI" id="CHEBI:30616"/>
    </ligand>
</feature>
<feature type="binding site" evidence="1">
    <location>
        <begin position="105"/>
        <end position="109"/>
    </location>
    <ligand>
        <name>ATP</name>
        <dbReference type="ChEBI" id="CHEBI:30616"/>
    </ligand>
</feature>
<feature type="binding site" evidence="1">
    <location>
        <position position="494"/>
    </location>
    <ligand>
        <name>ATP</name>
        <dbReference type="ChEBI" id="CHEBI:30616"/>
    </ligand>
</feature>
<feature type="binding site" evidence="1">
    <location>
        <position position="921"/>
    </location>
    <ligand>
        <name>Zn(2+)</name>
        <dbReference type="ChEBI" id="CHEBI:29105"/>
    </ligand>
</feature>
<feature type="binding site" evidence="1">
    <location>
        <position position="923"/>
    </location>
    <ligand>
        <name>Zn(2+)</name>
        <dbReference type="ChEBI" id="CHEBI:29105"/>
    </ligand>
</feature>
<feature type="binding site" evidence="1">
    <location>
        <position position="932"/>
    </location>
    <ligand>
        <name>Zn(2+)</name>
        <dbReference type="ChEBI" id="CHEBI:29105"/>
    </ligand>
</feature>
<feature type="binding site" evidence="1">
    <location>
        <position position="933"/>
    </location>
    <ligand>
        <name>Zn(2+)</name>
        <dbReference type="ChEBI" id="CHEBI:29105"/>
    </ligand>
</feature>
<protein>
    <recommendedName>
        <fullName evidence="1">Protein translocase subunit SecA</fullName>
        <ecNumber evidence="1">7.4.2.8</ecNumber>
    </recommendedName>
</protein>
<name>SECA_MYXXD</name>
<sequence length="940" mass="106305">MIEWTLKKLIGTKNERELKKAHAKVARVNELETRMRALKDEDFVSETNRMRQEIQNGRSLDDLLFEAFAITREAARRVIGQRHYDVQLIGGMFLHEGCIAEMRTGEGKTLTATLPTYLNALSGRGVHVVTVNDYLARRDAEWMGRVYRFLGMTTGCVLHELNDKQRQEAYRSDITYGQNNEFGFDYLRDNMKFRLQDYVQRELNFAIVDEVDSILIDEARTPLIISGPTEDSTDKYYRVDQVIPGLVPDQDYTLDEKHRSVSLTDDGIEKLQKRLGVGNLYDPGEIEMLHHVDQALRAHTLYKRDKDYVVKDGEVVIVDEFTGRQMPGRRWSDGLHQAIEAKEGVKIENENQTLATVSFQNYFRMYSKLAGMTGTADTEAEEFAKIYNLDVRVIPTNRPPIRKDLQDVVYKTEREKFEAVAAEIEELHKNGQPVLVGTVSIAKSEVVASFLKKRGIPHNVLNAKQHQREADIVAQAGRKGAVTISTNMAGRGTDILLGGNAEVLAKASMGPPPEPPTSAPDGQPLDLTAYEAEVAAWEQKFADTKAKLEEQTKKEREEVHTAGGLFIIGTERHESRRVDNQLRGRAGRQGDPGGSRFFLSLEDDLMRIFGSERIQGLMERLGMEEGEVIEHVWLSRAIEGAQKRVEGHNFDIRKNLLEYDDVMNQQRRTIYKLRRQVLAAGAGVPLVEYDEDPKTRIKTRSERTVSWADFRELILDSMEDVIVSLTDTYAPTRGVEGWDIAALQQGVKETFNLEMNFEGVGNREELQEHIYKAAEKVFQARDEEFGENFMRFLQYNYLATIDRLWKDHLLAMDHLRQGIGLRGYGQKDPKQEYKKEGYQGFIQMLSAIKAQFVTQLMHVQPRSASSAAEEAARIQRQLAQQQKKAVEGRATADGKLDEGSVAAAARPAAASRPAVGRNDPCPCGSGRKYKKCHGASEASV</sequence>
<comment type="function">
    <text evidence="1">Part of the Sec protein translocase complex. Interacts with the SecYEG preprotein conducting channel. Has a central role in coupling the hydrolysis of ATP to the transfer of proteins into and across the cell membrane, serving as an ATP-driven molecular motor driving the stepwise translocation of polypeptide chains across the membrane.</text>
</comment>
<comment type="catalytic activity">
    <reaction evidence="1">
        <text>ATP + H2O + cellular proteinSide 1 = ADP + phosphate + cellular proteinSide 2.</text>
        <dbReference type="EC" id="7.4.2.8"/>
    </reaction>
</comment>
<comment type="cofactor">
    <cofactor evidence="1">
        <name>Zn(2+)</name>
        <dbReference type="ChEBI" id="CHEBI:29105"/>
    </cofactor>
    <text evidence="1">May bind 1 zinc ion per subunit.</text>
</comment>
<comment type="subunit">
    <text evidence="1">Monomer and homodimer. Part of the essential Sec protein translocation apparatus which comprises SecA, SecYEG and auxiliary proteins SecDF-YajC and YidC.</text>
</comment>
<comment type="subcellular location">
    <subcellularLocation>
        <location evidence="1">Cell inner membrane</location>
        <topology evidence="1">Peripheral membrane protein</topology>
        <orientation evidence="1">Cytoplasmic side</orientation>
    </subcellularLocation>
    <subcellularLocation>
        <location evidence="1">Cytoplasm</location>
    </subcellularLocation>
    <text evidence="1">Distribution is 50-50.</text>
</comment>
<comment type="similarity">
    <text evidence="1">Belongs to the SecA family.</text>
</comment>
<gene>
    <name evidence="1" type="primary">secA</name>
    <name type="ordered locus">MXAN_5345</name>
</gene>
<keyword id="KW-0067">ATP-binding</keyword>
<keyword id="KW-0997">Cell inner membrane</keyword>
<keyword id="KW-1003">Cell membrane</keyword>
<keyword id="KW-0963">Cytoplasm</keyword>
<keyword id="KW-0472">Membrane</keyword>
<keyword id="KW-0479">Metal-binding</keyword>
<keyword id="KW-0547">Nucleotide-binding</keyword>
<keyword id="KW-0653">Protein transport</keyword>
<keyword id="KW-1185">Reference proteome</keyword>
<keyword id="KW-1278">Translocase</keyword>
<keyword id="KW-0811">Translocation</keyword>
<keyword id="KW-0813">Transport</keyword>
<keyword id="KW-0862">Zinc</keyword>
<reference key="1">
    <citation type="journal article" date="2006" name="Proc. Natl. Acad. Sci. U.S.A.">
        <title>Evolution of sensory complexity recorded in a myxobacterial genome.</title>
        <authorList>
            <person name="Goldman B.S."/>
            <person name="Nierman W.C."/>
            <person name="Kaiser D."/>
            <person name="Slater S.C."/>
            <person name="Durkin A.S."/>
            <person name="Eisen J.A."/>
            <person name="Ronning C.M."/>
            <person name="Barbazuk W.B."/>
            <person name="Blanchard M."/>
            <person name="Field C."/>
            <person name="Halling C."/>
            <person name="Hinkle G."/>
            <person name="Iartchuk O."/>
            <person name="Kim H.S."/>
            <person name="Mackenzie C."/>
            <person name="Madupu R."/>
            <person name="Miller N."/>
            <person name="Shvartsbeyn A."/>
            <person name="Sullivan S.A."/>
            <person name="Vaudin M."/>
            <person name="Wiegand R."/>
            <person name="Kaplan H.B."/>
        </authorList>
    </citation>
    <scope>NUCLEOTIDE SEQUENCE [LARGE SCALE GENOMIC DNA]</scope>
    <source>
        <strain>DK1622</strain>
    </source>
</reference>